<proteinExistence type="inferred from homology"/>
<organism>
    <name type="scientific">Actinobacillus pleuropneumoniae serotype 5b (strain L20)</name>
    <dbReference type="NCBI Taxonomy" id="416269"/>
    <lineage>
        <taxon>Bacteria</taxon>
        <taxon>Pseudomonadati</taxon>
        <taxon>Pseudomonadota</taxon>
        <taxon>Gammaproteobacteria</taxon>
        <taxon>Pasteurellales</taxon>
        <taxon>Pasteurellaceae</taxon>
        <taxon>Actinobacillus</taxon>
    </lineage>
</organism>
<protein>
    <recommendedName>
        <fullName evidence="1">Crossover junction endodeoxyribonuclease RuvC</fullName>
        <ecNumber evidence="1">3.1.21.10</ecNumber>
    </recommendedName>
    <alternativeName>
        <fullName evidence="1">Holliday junction nuclease RuvC</fullName>
    </alternativeName>
    <alternativeName>
        <fullName evidence="1">Holliday junction resolvase RuvC</fullName>
    </alternativeName>
</protein>
<reference key="1">
    <citation type="journal article" date="2008" name="J. Bacteriol.">
        <title>The complete genome sequence of Actinobacillus pleuropneumoniae L20 (serotype 5b).</title>
        <authorList>
            <person name="Foote S.J."/>
            <person name="Bosse J.T."/>
            <person name="Bouevitch A.B."/>
            <person name="Langford P.R."/>
            <person name="Young N.M."/>
            <person name="Nash J.H.E."/>
        </authorList>
    </citation>
    <scope>NUCLEOTIDE SEQUENCE [LARGE SCALE GENOMIC DNA]</scope>
    <source>
        <strain>L20</strain>
    </source>
</reference>
<feature type="chain" id="PRO_1000002709" description="Crossover junction endodeoxyribonuclease RuvC">
    <location>
        <begin position="1"/>
        <end position="192"/>
    </location>
</feature>
<feature type="active site" evidence="1">
    <location>
        <position position="8"/>
    </location>
</feature>
<feature type="active site" evidence="1">
    <location>
        <position position="67"/>
    </location>
</feature>
<feature type="active site" evidence="1">
    <location>
        <position position="139"/>
    </location>
</feature>
<feature type="binding site" evidence="1">
    <location>
        <position position="8"/>
    </location>
    <ligand>
        <name>Mg(2+)</name>
        <dbReference type="ChEBI" id="CHEBI:18420"/>
        <label>1</label>
    </ligand>
</feature>
<feature type="binding site" evidence="1">
    <location>
        <position position="67"/>
    </location>
    <ligand>
        <name>Mg(2+)</name>
        <dbReference type="ChEBI" id="CHEBI:18420"/>
        <label>2</label>
    </ligand>
</feature>
<feature type="binding site" evidence="1">
    <location>
        <position position="139"/>
    </location>
    <ligand>
        <name>Mg(2+)</name>
        <dbReference type="ChEBI" id="CHEBI:18420"/>
        <label>1</label>
    </ligand>
</feature>
<keyword id="KW-0963">Cytoplasm</keyword>
<keyword id="KW-0227">DNA damage</keyword>
<keyword id="KW-0233">DNA recombination</keyword>
<keyword id="KW-0234">DNA repair</keyword>
<keyword id="KW-0238">DNA-binding</keyword>
<keyword id="KW-0255">Endonuclease</keyword>
<keyword id="KW-0378">Hydrolase</keyword>
<keyword id="KW-0460">Magnesium</keyword>
<keyword id="KW-0479">Metal-binding</keyword>
<keyword id="KW-0540">Nuclease</keyword>
<keyword id="KW-1185">Reference proteome</keyword>
<sequence length="192" mass="20923">MPIILGIDPGSRVTGYGVIRQTGRHLEYLGSGAIRTSVDDLPTRLKRIYAGVTEIITQFHPDMFAIEQVFMAKNADSALKLGQARGTAIVAAVNHDLPVFEYAARLVKQTVTGIGSADKIQVQDMVTRMLQLSSKPQADAADALAIAITHAHSIQHSLIVAKQSDQKVGSDKEQILALMKTRYSRGRFRLKG</sequence>
<comment type="function">
    <text evidence="1">The RuvA-RuvB-RuvC complex processes Holliday junction (HJ) DNA during genetic recombination and DNA repair. Endonuclease that resolves HJ intermediates. Cleaves cruciform DNA by making single-stranded nicks across the HJ at symmetrical positions within the homologous arms, yielding a 5'-phosphate and a 3'-hydroxyl group; requires a central core of homology in the junction. The consensus cleavage sequence is 5'-(A/T)TT(C/G)-3'. Cleavage occurs on the 3'-side of the TT dinucleotide at the point of strand exchange. HJ branch migration catalyzed by RuvA-RuvB allows RuvC to scan DNA until it finds its consensus sequence, where it cleaves and resolves the cruciform DNA.</text>
</comment>
<comment type="catalytic activity">
    <reaction evidence="1">
        <text>Endonucleolytic cleavage at a junction such as a reciprocal single-stranded crossover between two homologous DNA duplexes (Holliday junction).</text>
        <dbReference type="EC" id="3.1.21.10"/>
    </reaction>
</comment>
<comment type="cofactor">
    <cofactor evidence="1">
        <name>Mg(2+)</name>
        <dbReference type="ChEBI" id="CHEBI:18420"/>
    </cofactor>
    <text evidence="1">Binds 2 Mg(2+) ion per subunit.</text>
</comment>
<comment type="subunit">
    <text evidence="1">Homodimer which binds Holliday junction (HJ) DNA. The HJ becomes 2-fold symmetrical on binding to RuvC with unstacked arms; it has a different conformation from HJ DNA in complex with RuvA. In the full resolvosome a probable DNA-RuvA(4)-RuvB(12)-RuvC(2) complex forms which resolves the HJ.</text>
</comment>
<comment type="subcellular location">
    <subcellularLocation>
        <location evidence="1">Cytoplasm</location>
    </subcellularLocation>
</comment>
<comment type="similarity">
    <text evidence="1">Belongs to the RuvC family.</text>
</comment>
<evidence type="ECO:0000255" key="1">
    <source>
        <dbReference type="HAMAP-Rule" id="MF_00034"/>
    </source>
</evidence>
<name>RUVC_ACTP2</name>
<dbReference type="EC" id="3.1.21.10" evidence="1"/>
<dbReference type="EMBL" id="CP000569">
    <property type="protein sequence ID" value="ABN74243.1"/>
    <property type="molecule type" value="Genomic_DNA"/>
</dbReference>
<dbReference type="RefSeq" id="WP_005615497.1">
    <property type="nucleotide sequence ID" value="NC_009053.1"/>
</dbReference>
<dbReference type="SMR" id="A3N1F7"/>
<dbReference type="STRING" id="416269.APL_1153"/>
<dbReference type="EnsemblBacteria" id="ABN74243">
    <property type="protein sequence ID" value="ABN74243"/>
    <property type="gene ID" value="APL_1153"/>
</dbReference>
<dbReference type="KEGG" id="apl:APL_1153"/>
<dbReference type="eggNOG" id="COG0817">
    <property type="taxonomic scope" value="Bacteria"/>
</dbReference>
<dbReference type="HOGENOM" id="CLU_091257_2_1_6"/>
<dbReference type="Proteomes" id="UP000001432">
    <property type="component" value="Chromosome"/>
</dbReference>
<dbReference type="GO" id="GO:0005737">
    <property type="term" value="C:cytoplasm"/>
    <property type="evidence" value="ECO:0007669"/>
    <property type="project" value="UniProtKB-SubCell"/>
</dbReference>
<dbReference type="GO" id="GO:0048476">
    <property type="term" value="C:Holliday junction resolvase complex"/>
    <property type="evidence" value="ECO:0007669"/>
    <property type="project" value="UniProtKB-UniRule"/>
</dbReference>
<dbReference type="GO" id="GO:0008821">
    <property type="term" value="F:crossover junction DNA endonuclease activity"/>
    <property type="evidence" value="ECO:0007669"/>
    <property type="project" value="UniProtKB-UniRule"/>
</dbReference>
<dbReference type="GO" id="GO:0003677">
    <property type="term" value="F:DNA binding"/>
    <property type="evidence" value="ECO:0007669"/>
    <property type="project" value="UniProtKB-KW"/>
</dbReference>
<dbReference type="GO" id="GO:0000287">
    <property type="term" value="F:magnesium ion binding"/>
    <property type="evidence" value="ECO:0007669"/>
    <property type="project" value="UniProtKB-UniRule"/>
</dbReference>
<dbReference type="GO" id="GO:0006310">
    <property type="term" value="P:DNA recombination"/>
    <property type="evidence" value="ECO:0007669"/>
    <property type="project" value="UniProtKB-UniRule"/>
</dbReference>
<dbReference type="GO" id="GO:0006281">
    <property type="term" value="P:DNA repair"/>
    <property type="evidence" value="ECO:0007669"/>
    <property type="project" value="UniProtKB-UniRule"/>
</dbReference>
<dbReference type="CDD" id="cd16962">
    <property type="entry name" value="RuvC"/>
    <property type="match status" value="1"/>
</dbReference>
<dbReference type="FunFam" id="3.30.420.10:FF:000002">
    <property type="entry name" value="Crossover junction endodeoxyribonuclease RuvC"/>
    <property type="match status" value="1"/>
</dbReference>
<dbReference type="Gene3D" id="3.30.420.10">
    <property type="entry name" value="Ribonuclease H-like superfamily/Ribonuclease H"/>
    <property type="match status" value="1"/>
</dbReference>
<dbReference type="HAMAP" id="MF_00034">
    <property type="entry name" value="RuvC"/>
    <property type="match status" value="1"/>
</dbReference>
<dbReference type="InterPro" id="IPR012337">
    <property type="entry name" value="RNaseH-like_sf"/>
</dbReference>
<dbReference type="InterPro" id="IPR036397">
    <property type="entry name" value="RNaseH_sf"/>
</dbReference>
<dbReference type="InterPro" id="IPR020563">
    <property type="entry name" value="X-over_junc_endoDNase_Mg_BS"/>
</dbReference>
<dbReference type="InterPro" id="IPR002176">
    <property type="entry name" value="X-over_junc_endoDNase_RuvC"/>
</dbReference>
<dbReference type="NCBIfam" id="TIGR00228">
    <property type="entry name" value="ruvC"/>
    <property type="match status" value="1"/>
</dbReference>
<dbReference type="PANTHER" id="PTHR30194">
    <property type="entry name" value="CROSSOVER JUNCTION ENDODEOXYRIBONUCLEASE RUVC"/>
    <property type="match status" value="1"/>
</dbReference>
<dbReference type="PANTHER" id="PTHR30194:SF3">
    <property type="entry name" value="CROSSOVER JUNCTION ENDODEOXYRIBONUCLEASE RUVC"/>
    <property type="match status" value="1"/>
</dbReference>
<dbReference type="Pfam" id="PF02075">
    <property type="entry name" value="RuvC"/>
    <property type="match status" value="1"/>
</dbReference>
<dbReference type="PRINTS" id="PR00696">
    <property type="entry name" value="RSOLVASERUVC"/>
</dbReference>
<dbReference type="SUPFAM" id="SSF53098">
    <property type="entry name" value="Ribonuclease H-like"/>
    <property type="match status" value="1"/>
</dbReference>
<dbReference type="PROSITE" id="PS01321">
    <property type="entry name" value="RUVC"/>
    <property type="match status" value="1"/>
</dbReference>
<gene>
    <name evidence="1" type="primary">ruvC</name>
    <name type="ordered locus">APL_1153</name>
</gene>
<accession>A3N1F7</accession>